<reference key="1">
    <citation type="journal article" date="1994" name="Biochim. Biophys. Acta">
        <title>Rat desmin gene structure and expression.</title>
        <authorList>
            <person name="van Groningen J.J.M."/>
            <person name="Bloemers H.P.J."/>
            <person name="Swart G.W.M."/>
        </authorList>
    </citation>
    <scope>NUCLEOTIDE SEQUENCE [GENOMIC DNA]</scope>
    <source>
        <strain>Wistar</strain>
        <tissue>Aorta</tissue>
    </source>
</reference>
<reference key="2">
    <citation type="journal article" date="1996" name="Arch. Biochem. Biophys.">
        <title>Characterization of ADP-ribosylation sites on desmin and restoration of desmin intermediate filament assembly by de-ADP-ribosylation.</title>
        <authorList>
            <person name="Zhou H."/>
            <person name="Huiatt T.W."/>
            <person name="Robson R.M."/>
            <person name="Sernett S.W."/>
            <person name="Graves D.J."/>
        </authorList>
    </citation>
    <scope>ADP-RIBOSYLATION AT ARG-58</scope>
</reference>
<reference key="3">
    <citation type="journal article" date="2012" name="Nat. Commun.">
        <title>Quantitative maps of protein phosphorylation sites across 14 different rat organs and tissues.</title>
        <authorList>
            <person name="Lundby A."/>
            <person name="Secher A."/>
            <person name="Lage K."/>
            <person name="Nordsborg N.B."/>
            <person name="Dmytriyev A."/>
            <person name="Lundby C."/>
            <person name="Olsen J.V."/>
        </authorList>
    </citation>
    <scope>PHOSPHORYLATION [LARGE SCALE ANALYSIS] AT SER-25; SER-28; SER-32; SER-45; SER-68; SER-81; SER-289; SER-357; SER-360 AND SER-423</scope>
    <scope>IDENTIFICATION BY MASS SPECTROMETRY [LARGE SCALE ANALYSIS]</scope>
</reference>
<reference key="4">
    <citation type="journal article" date="2013" name="Mol. Biol. Cell">
        <title>Nebulin binding impedes mutant desmin filament assembly.</title>
        <authorList>
            <person name="Baker L.K."/>
            <person name="Gillis D.C."/>
            <person name="Sharma S."/>
            <person name="Ambrus A."/>
            <person name="Herrmann H."/>
            <person name="Conover G.M."/>
        </authorList>
    </citation>
    <scope>SUBCELLULAR LOCATION</scope>
</reference>
<gene>
    <name type="primary">Des</name>
</gene>
<evidence type="ECO:0000250" key="1">
    <source>
        <dbReference type="UniProtKB" id="P02542"/>
    </source>
</evidence>
<evidence type="ECO:0000250" key="2">
    <source>
        <dbReference type="UniProtKB" id="P17661"/>
    </source>
</evidence>
<evidence type="ECO:0000250" key="3">
    <source>
        <dbReference type="UniProtKB" id="P31001"/>
    </source>
</evidence>
<evidence type="ECO:0000255" key="4">
    <source>
        <dbReference type="PROSITE-ProRule" id="PRU01188"/>
    </source>
</evidence>
<evidence type="ECO:0000269" key="5">
    <source>
    </source>
</evidence>
<evidence type="ECO:0000269" key="6">
    <source>
    </source>
</evidence>
<evidence type="ECO:0000305" key="7">
    <source>
    </source>
</evidence>
<evidence type="ECO:0007744" key="8">
    <source>
    </source>
</evidence>
<name>DESM_RAT</name>
<feature type="initiator methionine" description="Removed" evidence="1">
    <location>
        <position position="1"/>
    </location>
</feature>
<feature type="chain" id="PRO_0000063775" description="Desmin">
    <location>
        <begin position="2"/>
        <end position="469"/>
    </location>
</feature>
<feature type="domain" description="IF rod" evidence="4">
    <location>
        <begin position="107"/>
        <end position="415"/>
    </location>
</feature>
<feature type="region of interest" description="Head">
    <location>
        <begin position="2"/>
        <end position="108"/>
    </location>
</feature>
<feature type="region of interest" description="Coil 1A">
    <location>
        <begin position="109"/>
        <end position="140"/>
    </location>
</feature>
<feature type="region of interest" description="Linker 1">
    <location>
        <begin position="141"/>
        <end position="150"/>
    </location>
</feature>
<feature type="region of interest" description="Coil 1B">
    <location>
        <begin position="151"/>
        <end position="251"/>
    </location>
</feature>
<feature type="region of interest" description="Linker 12">
    <location>
        <begin position="252"/>
        <end position="267"/>
    </location>
</feature>
<feature type="region of interest" description="Interaction with NEB" evidence="2">
    <location>
        <begin position="267"/>
        <end position="414"/>
    </location>
</feature>
<feature type="region of interest" description="Coil 2A">
    <location>
        <begin position="268"/>
        <end position="286"/>
    </location>
</feature>
<feature type="region of interest" description="Linker 2">
    <location>
        <begin position="287"/>
        <end position="294"/>
    </location>
</feature>
<feature type="region of interest" description="Coil 2B">
    <location>
        <begin position="295"/>
        <end position="411"/>
    </location>
</feature>
<feature type="region of interest" description="Tail">
    <location>
        <begin position="412"/>
        <end position="469"/>
    </location>
</feature>
<feature type="region of interest" description="Interaction with CRYAB" evidence="2">
    <location>
        <begin position="437"/>
        <end position="452"/>
    </location>
</feature>
<feature type="modified residue" description="Phosphoserine; by CDK1" evidence="3">
    <location>
        <position position="7"/>
    </location>
</feature>
<feature type="modified residue" description="Phosphoserine; by AURKB" evidence="2">
    <location>
        <position position="12"/>
    </location>
</feature>
<feature type="modified residue" description="Omega-N-methylarginine" evidence="3">
    <location>
        <position position="16"/>
    </location>
</feature>
<feature type="modified residue" description="Phosphothreonine; by AURKB and ROCK1" evidence="2">
    <location>
        <position position="17"/>
    </location>
</feature>
<feature type="modified residue" description="Phosphoserine" evidence="8">
    <location>
        <position position="25"/>
    </location>
</feature>
<feature type="modified residue" description="Phosphoserine; by CDK1" evidence="8">
    <location>
        <position position="28"/>
    </location>
</feature>
<feature type="modified residue" description="Phosphoserine" evidence="3">
    <location>
        <position position="31"/>
    </location>
</feature>
<feature type="modified residue" description="Phosphoserine; by CDK1" evidence="8">
    <location>
        <position position="32"/>
    </location>
</feature>
<feature type="modified residue" description="Asymmetric dimethylarginine; alternate" evidence="3">
    <location>
        <position position="37"/>
    </location>
</feature>
<feature type="modified residue" description="Omega-N-methylarginine; alternate" evidence="3">
    <location>
        <position position="37"/>
    </location>
</feature>
<feature type="modified residue" description="Phosphoserine" evidence="8">
    <location>
        <position position="45"/>
    </location>
</feature>
<feature type="modified residue" description="ADP-ribosylarginine" evidence="7">
    <location>
        <position position="58"/>
    </location>
</feature>
<feature type="modified residue" description="Phosphoserine; by AURKB" evidence="2">
    <location>
        <position position="60"/>
    </location>
</feature>
<feature type="modified residue" description="Phosphoserine" evidence="8">
    <location>
        <position position="68"/>
    </location>
</feature>
<feature type="modified residue" description="Omega-N-methylarginine" evidence="3">
    <location>
        <position position="70"/>
    </location>
</feature>
<feature type="modified residue" description="Phosphothreonine; by ROCK1" evidence="2">
    <location>
        <position position="76"/>
    </location>
</feature>
<feature type="modified residue" description="Phosphothreonine; by ROCK1" evidence="2">
    <location>
        <position position="77"/>
    </location>
</feature>
<feature type="modified residue" description="Phosphoserine" evidence="8">
    <location>
        <position position="81"/>
    </location>
</feature>
<feature type="modified residue" description="Phosphoserine" evidence="8">
    <location>
        <position position="289"/>
    </location>
</feature>
<feature type="modified residue" description="Phosphoserine" evidence="8">
    <location>
        <position position="357"/>
    </location>
</feature>
<feature type="modified residue" description="Phosphoserine" evidence="8">
    <location>
        <position position="360"/>
    </location>
</feature>
<feature type="modified residue" description="Phosphoserine" evidence="8">
    <location>
        <position position="423"/>
    </location>
</feature>
<protein>
    <recommendedName>
        <fullName>Desmin</fullName>
    </recommendedName>
</protein>
<keyword id="KW-0013">ADP-ribosylation</keyword>
<keyword id="KW-1003">Cell membrane</keyword>
<keyword id="KW-0175">Coiled coil</keyword>
<keyword id="KW-0963">Cytoplasm</keyword>
<keyword id="KW-0403">Intermediate filament</keyword>
<keyword id="KW-0472">Membrane</keyword>
<keyword id="KW-0488">Methylation</keyword>
<keyword id="KW-0514">Muscle protein</keyword>
<keyword id="KW-0539">Nucleus</keyword>
<keyword id="KW-0597">Phosphoprotein</keyword>
<keyword id="KW-1185">Reference proteome</keyword>
<keyword id="KW-0832">Ubl conjugation</keyword>
<comment type="function">
    <text evidence="2 3">Muscle-specific type III intermediate filament essential for proper muscular structure and function. Plays a crucial role in maintaining the structure of sarcomeres, inter-connecting the Z-disks and forming the myofibrils, linking them not only to the sarcolemmal cytoskeleton, but also to the nucleus and mitochondria, thus providing strength for the muscle fiber during activity. In adult striated muscle they form a fibrous network connecting myofibrils to each other and to the plasma membrane from the periphery of the Z-line structures. May act as a sarcomeric microtubule-anchoring protein: specifically associates with detyrosinated tubulin-alpha chains, leading to buckled microtubules and mechanical resistance to contraction. Required for nuclear membrane integrity, via anchoring at the cell tip and nuclear envelope, resulting in maintenance of microtubule-derived intracellular mechanical forces (By similarity). Contributes to the transcriptional regulation of the NKX2-5 gene in cardiac progenitor cells during a short period of cardiomyogenesis and in cardiac side population stem cells in the adult. Plays a role in maintaining an optimal conformation of nebulette (NEB) on heart muscle sarcomeres to bind and recruit cardiac alpha-actin.</text>
</comment>
<comment type="subunit">
    <text evidence="2 3">Homomer (By similarity). Interacts with DST (By similarity). Interacts with MTM1 (By similarity). Interacts with EPPK1; interaction is dependent of higher-order structure of intermediate filament (By similarity). Interacts with CRYAB (By similarity). Interacts with NEB (via nebulin repeats 160-164) (By similarity). Interacts (via rod region) with NEBL (via nebulin repeats 1-5) (By similarity). Interacts with PKP1 (By similarity). Interacts with FLII (By similarity).</text>
</comment>
<comment type="subcellular location">
    <subcellularLocation>
        <location evidence="5">Cytoplasm</location>
        <location evidence="5">Myofibril</location>
        <location evidence="5">Sarcomere</location>
        <location evidence="5">Z line</location>
    </subcellularLocation>
    <subcellularLocation>
        <location evidence="2">Cytoplasm</location>
    </subcellularLocation>
    <subcellularLocation>
        <location evidence="2">Cell membrane</location>
        <location evidence="2">Sarcolemma</location>
    </subcellularLocation>
    <subcellularLocation>
        <location evidence="3">Nucleus</location>
    </subcellularLocation>
    <subcellularLocation>
        <location evidence="3">Cell tip</location>
    </subcellularLocation>
    <subcellularLocation>
        <location evidence="3">Nucleus envelope</location>
    </subcellularLocation>
    <text evidence="2 3">Localizes in the intercalated disks which occur at the Z line of cardiomyocytes. Localizes in the nucleus exclusively in differentiating cardiac progenitor cells and premature cardiomyocytes. Interacts with ASB2; the interaction targets DES for proteasomal degradation (By similarity). PKP2 is required for correct anchoring of DES at the cell tip and nuclear envelope (By similarity).</text>
</comment>
<comment type="PTM">
    <text evidence="6">ADP-ribosylation prevents ability to form intermediate filaments.</text>
</comment>
<comment type="PTM">
    <text evidence="3">Phosphorylation at Ser-7, Ser-28 and Ser-32 by CDK1, phosphorylation at Ser-60 by AURKB and phosphorylation at Thr-76 by ROCK1 contribute to efficient separation of desmin intermediate filaments during mitosis.</text>
</comment>
<comment type="PTM">
    <text evidence="3">Ubiquitination by a SCF-like complex containing ASB2 leads to proteasomal degradation.</text>
</comment>
<comment type="similarity">
    <text evidence="4">Belongs to the intermediate filament family.</text>
</comment>
<accession>P48675</accession>
<sequence>MSQAYSSSQRVSSYRRTFGGAPGFSLGSPLSSPVFPRAGFGTKGSSSSVTSRVYQVSRTSGGAGGLGSLRASRLGTTRAPSYGAGELLDFSLADAVNQEFLATRTNEKVELQELNDRFANYFEKVRFLEQQNAALAAEVNRLKGREPTRVAELYEEEMRELRRQVEVLTNQRARVDVERDNLIDDLQRLKAKLQEEIQLREEAENNLAAFRADVDAATLARIDLERRIESLNEEIAFLKKVHEEEIRELQAQLQEQQVQVEMDMSKPDLTAALRDIRAQYETIAAKNISEAEEWYKSKVSDLTQAANKNNDALRQAKQEMMEYRHQIQSYTCEIDALKGTNDSLMRQMRELEDRFASEASGYQDNIARLEEEIRHLKDEMARHLREYQDLLNVKMALDVEIATYRKLLEGEESRINLPIQTFSALNFRETSPEQRGSEVHTKKTVMIKTIETRDGEVVSEATQQQHEVL</sequence>
<dbReference type="EMBL" id="X73524">
    <property type="protein sequence ID" value="CAA51920.1"/>
    <property type="molecule type" value="Genomic_DNA"/>
</dbReference>
<dbReference type="PIR" id="I52469">
    <property type="entry name" value="I52469"/>
</dbReference>
<dbReference type="RefSeq" id="NP_071976.1">
    <property type="nucleotide sequence ID" value="NM_022531.1"/>
</dbReference>
<dbReference type="SMR" id="P48675"/>
<dbReference type="BioGRID" id="249046">
    <property type="interactions" value="1"/>
</dbReference>
<dbReference type="FunCoup" id="P48675">
    <property type="interactions" value="527"/>
</dbReference>
<dbReference type="IntAct" id="P48675">
    <property type="interactions" value="6"/>
</dbReference>
<dbReference type="STRING" id="10116.ENSRNOP00000026860"/>
<dbReference type="GlyGen" id="P48675">
    <property type="glycosylation" value="1 site, 1 O-linked glycan (1 site)"/>
</dbReference>
<dbReference type="iPTMnet" id="P48675"/>
<dbReference type="PhosphoSitePlus" id="P48675"/>
<dbReference type="jPOST" id="P48675"/>
<dbReference type="PaxDb" id="10116-ENSRNOP00000026860"/>
<dbReference type="GeneID" id="64362"/>
<dbReference type="KEGG" id="rno:64362"/>
<dbReference type="UCSC" id="RGD:620686">
    <property type="organism name" value="rat"/>
</dbReference>
<dbReference type="AGR" id="RGD:620686"/>
<dbReference type="CTD" id="1674"/>
<dbReference type="RGD" id="620686">
    <property type="gene designation" value="Des"/>
</dbReference>
<dbReference type="eggNOG" id="KOG0977">
    <property type="taxonomic scope" value="Eukaryota"/>
</dbReference>
<dbReference type="InParanoid" id="P48675"/>
<dbReference type="OrthoDB" id="2441647at2759"/>
<dbReference type="PhylomeDB" id="P48675"/>
<dbReference type="Reactome" id="R-RNO-390522">
    <property type="pathway name" value="Striated Muscle Contraction"/>
</dbReference>
<dbReference type="PRO" id="PR:P48675"/>
<dbReference type="Proteomes" id="UP000002494">
    <property type="component" value="Unplaced"/>
</dbReference>
<dbReference type="GO" id="GO:0097512">
    <property type="term" value="C:cardiac myofibril"/>
    <property type="evidence" value="ECO:0000266"/>
    <property type="project" value="RGD"/>
</dbReference>
<dbReference type="GO" id="GO:0051286">
    <property type="term" value="C:cell tip"/>
    <property type="evidence" value="ECO:0000250"/>
    <property type="project" value="UniProtKB"/>
</dbReference>
<dbReference type="GO" id="GO:0005911">
    <property type="term" value="C:cell-cell junction"/>
    <property type="evidence" value="ECO:0000266"/>
    <property type="project" value="RGD"/>
</dbReference>
<dbReference type="GO" id="GO:0043292">
    <property type="term" value="C:contractile muscle fiber"/>
    <property type="evidence" value="ECO:0000266"/>
    <property type="project" value="RGD"/>
</dbReference>
<dbReference type="GO" id="GO:0005737">
    <property type="term" value="C:cytoplasm"/>
    <property type="evidence" value="ECO:0000250"/>
    <property type="project" value="UniProtKB"/>
</dbReference>
<dbReference type="GO" id="GO:0005856">
    <property type="term" value="C:cytoskeleton"/>
    <property type="evidence" value="ECO:0000266"/>
    <property type="project" value="RGD"/>
</dbReference>
<dbReference type="GO" id="GO:0005916">
    <property type="term" value="C:fascia adherens"/>
    <property type="evidence" value="ECO:0000266"/>
    <property type="project" value="RGD"/>
</dbReference>
<dbReference type="GO" id="GO:0005921">
    <property type="term" value="C:gap junction"/>
    <property type="evidence" value="ECO:0000314"/>
    <property type="project" value="BHF-UCL"/>
</dbReference>
<dbReference type="GO" id="GO:0014704">
    <property type="term" value="C:intercalated disc"/>
    <property type="evidence" value="ECO:0000250"/>
    <property type="project" value="UniProtKB"/>
</dbReference>
<dbReference type="GO" id="GO:0005882">
    <property type="term" value="C:intermediate filament"/>
    <property type="evidence" value="ECO:0000266"/>
    <property type="project" value="RGD"/>
</dbReference>
<dbReference type="GO" id="GO:0031594">
    <property type="term" value="C:neuromuscular junction"/>
    <property type="evidence" value="ECO:0000266"/>
    <property type="project" value="RGD"/>
</dbReference>
<dbReference type="GO" id="GO:0005635">
    <property type="term" value="C:nuclear envelope"/>
    <property type="evidence" value="ECO:0000250"/>
    <property type="project" value="UniProtKB"/>
</dbReference>
<dbReference type="GO" id="GO:0005634">
    <property type="term" value="C:nucleus"/>
    <property type="evidence" value="ECO:0000250"/>
    <property type="project" value="UniProtKB"/>
</dbReference>
<dbReference type="GO" id="GO:0042383">
    <property type="term" value="C:sarcolemma"/>
    <property type="evidence" value="ECO:0000250"/>
    <property type="project" value="UniProtKB"/>
</dbReference>
<dbReference type="GO" id="GO:0045098">
    <property type="term" value="C:type III intermediate filament"/>
    <property type="evidence" value="ECO:0000314"/>
    <property type="project" value="RGD"/>
</dbReference>
<dbReference type="GO" id="GO:0030018">
    <property type="term" value="C:Z disc"/>
    <property type="evidence" value="ECO:0000314"/>
    <property type="project" value="UniProtKB"/>
</dbReference>
<dbReference type="GO" id="GO:0008092">
    <property type="term" value="F:cytoskeletal protein binding"/>
    <property type="evidence" value="ECO:0000266"/>
    <property type="project" value="RGD"/>
</dbReference>
<dbReference type="GO" id="GO:0042802">
    <property type="term" value="F:identical protein binding"/>
    <property type="evidence" value="ECO:0000266"/>
    <property type="project" value="RGD"/>
</dbReference>
<dbReference type="GO" id="GO:0005200">
    <property type="term" value="F:structural constituent of cytoskeleton"/>
    <property type="evidence" value="ECO:0000318"/>
    <property type="project" value="GO_Central"/>
</dbReference>
<dbReference type="GO" id="GO:0045109">
    <property type="term" value="P:intermediate filament organization"/>
    <property type="evidence" value="ECO:0000250"/>
    <property type="project" value="UniProtKB"/>
</dbReference>
<dbReference type="GO" id="GO:0006998">
    <property type="term" value="P:nuclear envelope organization"/>
    <property type="evidence" value="ECO:0000250"/>
    <property type="project" value="UniProtKB"/>
</dbReference>
<dbReference type="GO" id="GO:0060538">
    <property type="term" value="P:skeletal muscle organ development"/>
    <property type="evidence" value="ECO:0000318"/>
    <property type="project" value="GO_Central"/>
</dbReference>
<dbReference type="FunFam" id="1.20.5.1160:FF:000001">
    <property type="entry name" value="Keratin type II"/>
    <property type="match status" value="1"/>
</dbReference>
<dbReference type="FunFam" id="1.20.5.170:FF:000002">
    <property type="entry name" value="Type I keratin KA11"/>
    <property type="match status" value="1"/>
</dbReference>
<dbReference type="FunFam" id="1.20.5.500:FF:000001">
    <property type="entry name" value="Type II keratin 23"/>
    <property type="match status" value="1"/>
</dbReference>
<dbReference type="Gene3D" id="1.20.5.170">
    <property type="match status" value="1"/>
</dbReference>
<dbReference type="Gene3D" id="1.20.5.500">
    <property type="entry name" value="Single helix bin"/>
    <property type="match status" value="1"/>
</dbReference>
<dbReference type="Gene3D" id="1.20.5.1160">
    <property type="entry name" value="Vasodilator-stimulated phosphoprotein"/>
    <property type="match status" value="1"/>
</dbReference>
<dbReference type="InterPro" id="IPR018039">
    <property type="entry name" value="IF_conserved"/>
</dbReference>
<dbReference type="InterPro" id="IPR039008">
    <property type="entry name" value="IF_rod_dom"/>
</dbReference>
<dbReference type="InterPro" id="IPR006821">
    <property type="entry name" value="Intermed_filament_DNA-bd"/>
</dbReference>
<dbReference type="InterPro" id="IPR050405">
    <property type="entry name" value="Intermediate_filament"/>
</dbReference>
<dbReference type="PANTHER" id="PTHR45652:SF2">
    <property type="entry name" value="DESMIN"/>
    <property type="match status" value="1"/>
</dbReference>
<dbReference type="PANTHER" id="PTHR45652">
    <property type="entry name" value="GLIAL FIBRILLARY ACIDIC PROTEIN"/>
    <property type="match status" value="1"/>
</dbReference>
<dbReference type="Pfam" id="PF00038">
    <property type="entry name" value="Filament"/>
    <property type="match status" value="1"/>
</dbReference>
<dbReference type="Pfam" id="PF04732">
    <property type="entry name" value="Filament_head"/>
    <property type="match status" value="1"/>
</dbReference>
<dbReference type="SMART" id="SM01391">
    <property type="entry name" value="Filament"/>
    <property type="match status" value="1"/>
</dbReference>
<dbReference type="SUPFAM" id="SSF64593">
    <property type="entry name" value="Intermediate filament protein, coiled coil region"/>
    <property type="match status" value="2"/>
</dbReference>
<dbReference type="PROSITE" id="PS00226">
    <property type="entry name" value="IF_ROD_1"/>
    <property type="match status" value="1"/>
</dbReference>
<dbReference type="PROSITE" id="PS51842">
    <property type="entry name" value="IF_ROD_2"/>
    <property type="match status" value="1"/>
</dbReference>
<proteinExistence type="evidence at protein level"/>
<organism>
    <name type="scientific">Rattus norvegicus</name>
    <name type="common">Rat</name>
    <dbReference type="NCBI Taxonomy" id="10116"/>
    <lineage>
        <taxon>Eukaryota</taxon>
        <taxon>Metazoa</taxon>
        <taxon>Chordata</taxon>
        <taxon>Craniata</taxon>
        <taxon>Vertebrata</taxon>
        <taxon>Euteleostomi</taxon>
        <taxon>Mammalia</taxon>
        <taxon>Eutheria</taxon>
        <taxon>Euarchontoglires</taxon>
        <taxon>Glires</taxon>
        <taxon>Rodentia</taxon>
        <taxon>Myomorpha</taxon>
        <taxon>Muroidea</taxon>
        <taxon>Muridae</taxon>
        <taxon>Murinae</taxon>
        <taxon>Rattus</taxon>
    </lineage>
</organism>